<sequence length="198" mass="22050">MRYYPQPMGKLINQLSRLPGIGPKTAQRLAFYILRLNPSEVRELSQSMIDAREKTKYCSVCNNLTEKDPCDFCSSPERDHNLICVVESPKDVIAMERTGEYKGLYHVLHGSISPIDGIGPEDIKIRNLLPRLKEGVKEVIVATDPNAEGDATAMYLARLIKPLGVKVTRIAHGLPVGGDLEYADEVTLSKALEGRREM</sequence>
<keyword id="KW-0227">DNA damage</keyword>
<keyword id="KW-0233">DNA recombination</keyword>
<keyword id="KW-0234">DNA repair</keyword>
<keyword id="KW-0479">Metal-binding</keyword>
<keyword id="KW-1185">Reference proteome</keyword>
<keyword id="KW-0862">Zinc</keyword>
<keyword id="KW-0863">Zinc-finger</keyword>
<protein>
    <recommendedName>
        <fullName evidence="1">Recombination protein RecR</fullName>
    </recommendedName>
</protein>
<name>RECR_HALOH</name>
<dbReference type="EMBL" id="CP001098">
    <property type="protein sequence ID" value="ACL70822.1"/>
    <property type="molecule type" value="Genomic_DNA"/>
</dbReference>
<dbReference type="RefSeq" id="WP_015923791.1">
    <property type="nucleotide sequence ID" value="NC_011899.1"/>
</dbReference>
<dbReference type="SMR" id="B8CZX0"/>
<dbReference type="STRING" id="373903.Hore_20770"/>
<dbReference type="KEGG" id="hor:Hore_20770"/>
<dbReference type="eggNOG" id="COG0353">
    <property type="taxonomic scope" value="Bacteria"/>
</dbReference>
<dbReference type="HOGENOM" id="CLU_060739_1_0_9"/>
<dbReference type="OrthoDB" id="9802672at2"/>
<dbReference type="Proteomes" id="UP000000719">
    <property type="component" value="Chromosome"/>
</dbReference>
<dbReference type="GO" id="GO:0003677">
    <property type="term" value="F:DNA binding"/>
    <property type="evidence" value="ECO:0007669"/>
    <property type="project" value="UniProtKB-UniRule"/>
</dbReference>
<dbReference type="GO" id="GO:0008270">
    <property type="term" value="F:zinc ion binding"/>
    <property type="evidence" value="ECO:0007669"/>
    <property type="project" value="UniProtKB-KW"/>
</dbReference>
<dbReference type="GO" id="GO:0006310">
    <property type="term" value="P:DNA recombination"/>
    <property type="evidence" value="ECO:0007669"/>
    <property type="project" value="UniProtKB-UniRule"/>
</dbReference>
<dbReference type="GO" id="GO:0006281">
    <property type="term" value="P:DNA repair"/>
    <property type="evidence" value="ECO:0007669"/>
    <property type="project" value="UniProtKB-UniRule"/>
</dbReference>
<dbReference type="CDD" id="cd01025">
    <property type="entry name" value="TOPRIM_recR"/>
    <property type="match status" value="1"/>
</dbReference>
<dbReference type="Gene3D" id="3.30.60.80">
    <property type="match status" value="1"/>
</dbReference>
<dbReference type="Gene3D" id="3.40.1360.10">
    <property type="match status" value="1"/>
</dbReference>
<dbReference type="Gene3D" id="6.10.250.240">
    <property type="match status" value="1"/>
</dbReference>
<dbReference type="Gene3D" id="1.10.8.420">
    <property type="entry name" value="RecR Domain 1"/>
    <property type="match status" value="1"/>
</dbReference>
<dbReference type="HAMAP" id="MF_00017">
    <property type="entry name" value="RecR"/>
    <property type="match status" value="1"/>
</dbReference>
<dbReference type="InterPro" id="IPR000093">
    <property type="entry name" value="DNA_Rcmb_RecR"/>
</dbReference>
<dbReference type="InterPro" id="IPR003583">
    <property type="entry name" value="Hlx-hairpin-Hlx_DNA-bd_motif"/>
</dbReference>
<dbReference type="InterPro" id="IPR023627">
    <property type="entry name" value="Rcmb_RecR"/>
</dbReference>
<dbReference type="InterPro" id="IPR015967">
    <property type="entry name" value="Rcmb_RecR_Znf"/>
</dbReference>
<dbReference type="InterPro" id="IPR006171">
    <property type="entry name" value="TOPRIM_dom"/>
</dbReference>
<dbReference type="InterPro" id="IPR034137">
    <property type="entry name" value="TOPRIM_RecR"/>
</dbReference>
<dbReference type="NCBIfam" id="TIGR00615">
    <property type="entry name" value="recR"/>
    <property type="match status" value="1"/>
</dbReference>
<dbReference type="PANTHER" id="PTHR30446">
    <property type="entry name" value="RECOMBINATION PROTEIN RECR"/>
    <property type="match status" value="1"/>
</dbReference>
<dbReference type="PANTHER" id="PTHR30446:SF0">
    <property type="entry name" value="RECOMBINATION PROTEIN RECR"/>
    <property type="match status" value="1"/>
</dbReference>
<dbReference type="Pfam" id="PF21175">
    <property type="entry name" value="RecR_C"/>
    <property type="match status" value="1"/>
</dbReference>
<dbReference type="Pfam" id="PF21176">
    <property type="entry name" value="RecR_HhH"/>
    <property type="match status" value="1"/>
</dbReference>
<dbReference type="Pfam" id="PF02132">
    <property type="entry name" value="RecR_ZnF"/>
    <property type="match status" value="1"/>
</dbReference>
<dbReference type="Pfam" id="PF13662">
    <property type="entry name" value="Toprim_4"/>
    <property type="match status" value="1"/>
</dbReference>
<dbReference type="SMART" id="SM00278">
    <property type="entry name" value="HhH1"/>
    <property type="match status" value="1"/>
</dbReference>
<dbReference type="SMART" id="SM00493">
    <property type="entry name" value="TOPRIM"/>
    <property type="match status" value="1"/>
</dbReference>
<dbReference type="SUPFAM" id="SSF111304">
    <property type="entry name" value="Recombination protein RecR"/>
    <property type="match status" value="1"/>
</dbReference>
<dbReference type="PROSITE" id="PS01300">
    <property type="entry name" value="RECR"/>
    <property type="match status" value="1"/>
</dbReference>
<dbReference type="PROSITE" id="PS50880">
    <property type="entry name" value="TOPRIM"/>
    <property type="match status" value="1"/>
</dbReference>
<reference key="1">
    <citation type="journal article" date="2009" name="PLoS ONE">
        <title>Genome analysis of the anaerobic thermohalophilic bacterium Halothermothrix orenii.</title>
        <authorList>
            <person name="Mavromatis K."/>
            <person name="Ivanova N."/>
            <person name="Anderson I."/>
            <person name="Lykidis A."/>
            <person name="Hooper S.D."/>
            <person name="Sun H."/>
            <person name="Kunin V."/>
            <person name="Lapidus A."/>
            <person name="Hugenholtz P."/>
            <person name="Patel B."/>
            <person name="Kyrpides N.C."/>
        </authorList>
    </citation>
    <scope>NUCLEOTIDE SEQUENCE [LARGE SCALE GENOMIC DNA]</scope>
    <source>
        <strain>H 168 / OCM 544 / DSM 9562</strain>
    </source>
</reference>
<proteinExistence type="inferred from homology"/>
<evidence type="ECO:0000255" key="1">
    <source>
        <dbReference type="HAMAP-Rule" id="MF_00017"/>
    </source>
</evidence>
<gene>
    <name evidence="1" type="primary">recR</name>
    <name type="ordered locus">Hore_20770</name>
</gene>
<accession>B8CZX0</accession>
<organism>
    <name type="scientific">Halothermothrix orenii (strain H 168 / OCM 544 / DSM 9562)</name>
    <dbReference type="NCBI Taxonomy" id="373903"/>
    <lineage>
        <taxon>Bacteria</taxon>
        <taxon>Bacillati</taxon>
        <taxon>Bacillota</taxon>
        <taxon>Clostridia</taxon>
        <taxon>Halanaerobiales</taxon>
        <taxon>Halothermotrichaceae</taxon>
        <taxon>Halothermothrix</taxon>
    </lineage>
</organism>
<feature type="chain" id="PRO_1000195394" description="Recombination protein RecR">
    <location>
        <begin position="1"/>
        <end position="198"/>
    </location>
</feature>
<feature type="domain" description="Toprim" evidence="1">
    <location>
        <begin position="81"/>
        <end position="175"/>
    </location>
</feature>
<feature type="zinc finger region" description="C4-type" evidence="1">
    <location>
        <begin position="58"/>
        <end position="73"/>
    </location>
</feature>
<comment type="function">
    <text evidence="1">May play a role in DNA repair. It seems to be involved in an RecBC-independent recombinational process of DNA repair. It may act with RecF and RecO.</text>
</comment>
<comment type="similarity">
    <text evidence="1">Belongs to the RecR family.</text>
</comment>